<dbReference type="EC" id="2.7.4.6" evidence="1"/>
<dbReference type="EMBL" id="CP000096">
    <property type="protein sequence ID" value="ABB23117.1"/>
    <property type="molecule type" value="Genomic_DNA"/>
</dbReference>
<dbReference type="RefSeq" id="WP_011356992.1">
    <property type="nucleotide sequence ID" value="NC_007512.1"/>
</dbReference>
<dbReference type="SMR" id="Q3B6B4"/>
<dbReference type="STRING" id="319225.Plut_0229"/>
<dbReference type="KEGG" id="plt:Plut_0229"/>
<dbReference type="eggNOG" id="COG0105">
    <property type="taxonomic scope" value="Bacteria"/>
</dbReference>
<dbReference type="HOGENOM" id="CLU_060216_8_1_10"/>
<dbReference type="OrthoDB" id="9801161at2"/>
<dbReference type="Proteomes" id="UP000002709">
    <property type="component" value="Chromosome"/>
</dbReference>
<dbReference type="GO" id="GO:0005737">
    <property type="term" value="C:cytoplasm"/>
    <property type="evidence" value="ECO:0007669"/>
    <property type="project" value="UniProtKB-SubCell"/>
</dbReference>
<dbReference type="GO" id="GO:0005524">
    <property type="term" value="F:ATP binding"/>
    <property type="evidence" value="ECO:0007669"/>
    <property type="project" value="UniProtKB-UniRule"/>
</dbReference>
<dbReference type="GO" id="GO:0046872">
    <property type="term" value="F:metal ion binding"/>
    <property type="evidence" value="ECO:0007669"/>
    <property type="project" value="UniProtKB-KW"/>
</dbReference>
<dbReference type="GO" id="GO:0004550">
    <property type="term" value="F:nucleoside diphosphate kinase activity"/>
    <property type="evidence" value="ECO:0007669"/>
    <property type="project" value="UniProtKB-UniRule"/>
</dbReference>
<dbReference type="GO" id="GO:0006241">
    <property type="term" value="P:CTP biosynthetic process"/>
    <property type="evidence" value="ECO:0007669"/>
    <property type="project" value="UniProtKB-UniRule"/>
</dbReference>
<dbReference type="GO" id="GO:0006183">
    <property type="term" value="P:GTP biosynthetic process"/>
    <property type="evidence" value="ECO:0007669"/>
    <property type="project" value="UniProtKB-UniRule"/>
</dbReference>
<dbReference type="GO" id="GO:0006228">
    <property type="term" value="P:UTP biosynthetic process"/>
    <property type="evidence" value="ECO:0007669"/>
    <property type="project" value="UniProtKB-UniRule"/>
</dbReference>
<dbReference type="CDD" id="cd04413">
    <property type="entry name" value="NDPk_I"/>
    <property type="match status" value="1"/>
</dbReference>
<dbReference type="FunFam" id="3.30.70.141:FF:000003">
    <property type="entry name" value="Nucleoside diphosphate kinase"/>
    <property type="match status" value="1"/>
</dbReference>
<dbReference type="Gene3D" id="3.30.70.141">
    <property type="entry name" value="Nucleoside diphosphate kinase-like domain"/>
    <property type="match status" value="1"/>
</dbReference>
<dbReference type="HAMAP" id="MF_00451">
    <property type="entry name" value="NDP_kinase"/>
    <property type="match status" value="1"/>
</dbReference>
<dbReference type="InterPro" id="IPR034907">
    <property type="entry name" value="NDK-like_dom"/>
</dbReference>
<dbReference type="InterPro" id="IPR036850">
    <property type="entry name" value="NDK-like_dom_sf"/>
</dbReference>
<dbReference type="InterPro" id="IPR001564">
    <property type="entry name" value="Nucleoside_diP_kinase"/>
</dbReference>
<dbReference type="NCBIfam" id="NF001908">
    <property type="entry name" value="PRK00668.1"/>
    <property type="match status" value="1"/>
</dbReference>
<dbReference type="NCBIfam" id="NF011113">
    <property type="entry name" value="PRK14541.1"/>
    <property type="match status" value="1"/>
</dbReference>
<dbReference type="PANTHER" id="PTHR46161">
    <property type="entry name" value="NUCLEOSIDE DIPHOSPHATE KINASE"/>
    <property type="match status" value="1"/>
</dbReference>
<dbReference type="PANTHER" id="PTHR46161:SF3">
    <property type="entry name" value="NUCLEOSIDE DIPHOSPHATE KINASE DDB_G0292928-RELATED"/>
    <property type="match status" value="1"/>
</dbReference>
<dbReference type="Pfam" id="PF00334">
    <property type="entry name" value="NDK"/>
    <property type="match status" value="1"/>
</dbReference>
<dbReference type="PRINTS" id="PR01243">
    <property type="entry name" value="NUCDPKINASE"/>
</dbReference>
<dbReference type="SMART" id="SM00562">
    <property type="entry name" value="NDK"/>
    <property type="match status" value="1"/>
</dbReference>
<dbReference type="SUPFAM" id="SSF54919">
    <property type="entry name" value="Nucleoside diphosphate kinase, NDK"/>
    <property type="match status" value="1"/>
</dbReference>
<dbReference type="PROSITE" id="PS51374">
    <property type="entry name" value="NDPK_LIKE"/>
    <property type="match status" value="1"/>
</dbReference>
<keyword id="KW-0067">ATP-binding</keyword>
<keyword id="KW-0963">Cytoplasm</keyword>
<keyword id="KW-0418">Kinase</keyword>
<keyword id="KW-0460">Magnesium</keyword>
<keyword id="KW-0479">Metal-binding</keyword>
<keyword id="KW-0546">Nucleotide metabolism</keyword>
<keyword id="KW-0547">Nucleotide-binding</keyword>
<keyword id="KW-0597">Phosphoprotein</keyword>
<keyword id="KW-1185">Reference proteome</keyword>
<keyword id="KW-0808">Transferase</keyword>
<evidence type="ECO:0000255" key="1">
    <source>
        <dbReference type="HAMAP-Rule" id="MF_00451"/>
    </source>
</evidence>
<feature type="chain" id="PRO_0000242506" description="Nucleoside diphosphate kinase">
    <location>
        <begin position="1"/>
        <end position="140"/>
    </location>
</feature>
<feature type="active site" description="Pros-phosphohistidine intermediate" evidence="1">
    <location>
        <position position="115"/>
    </location>
</feature>
<feature type="binding site" evidence="1">
    <location>
        <position position="9"/>
    </location>
    <ligand>
        <name>ATP</name>
        <dbReference type="ChEBI" id="CHEBI:30616"/>
    </ligand>
</feature>
<feature type="binding site" evidence="1">
    <location>
        <position position="57"/>
    </location>
    <ligand>
        <name>ATP</name>
        <dbReference type="ChEBI" id="CHEBI:30616"/>
    </ligand>
</feature>
<feature type="binding site" evidence="1">
    <location>
        <position position="85"/>
    </location>
    <ligand>
        <name>ATP</name>
        <dbReference type="ChEBI" id="CHEBI:30616"/>
    </ligand>
</feature>
<feature type="binding site" evidence="1">
    <location>
        <position position="91"/>
    </location>
    <ligand>
        <name>ATP</name>
        <dbReference type="ChEBI" id="CHEBI:30616"/>
    </ligand>
</feature>
<feature type="binding site" evidence="1">
    <location>
        <position position="102"/>
    </location>
    <ligand>
        <name>ATP</name>
        <dbReference type="ChEBI" id="CHEBI:30616"/>
    </ligand>
</feature>
<feature type="binding site" evidence="1">
    <location>
        <position position="112"/>
    </location>
    <ligand>
        <name>ATP</name>
        <dbReference type="ChEBI" id="CHEBI:30616"/>
    </ligand>
</feature>
<gene>
    <name evidence="1" type="primary">ndk</name>
    <name type="ordered locus">Plut_0229</name>
</gene>
<organism>
    <name type="scientific">Chlorobium luteolum (strain DSM 273 / BCRC 81028 / 2530)</name>
    <name type="common">Pelodictyon luteolum</name>
    <dbReference type="NCBI Taxonomy" id="319225"/>
    <lineage>
        <taxon>Bacteria</taxon>
        <taxon>Pseudomonadati</taxon>
        <taxon>Chlorobiota</taxon>
        <taxon>Chlorobiia</taxon>
        <taxon>Chlorobiales</taxon>
        <taxon>Chlorobiaceae</taxon>
        <taxon>Chlorobium/Pelodictyon group</taxon>
        <taxon>Pelodictyon</taxon>
    </lineage>
</organism>
<reference key="1">
    <citation type="submission" date="2005-08" db="EMBL/GenBank/DDBJ databases">
        <title>Complete sequence of Pelodictyon luteolum DSM 273.</title>
        <authorList>
            <consortium name="US DOE Joint Genome Institute"/>
            <person name="Copeland A."/>
            <person name="Lucas S."/>
            <person name="Lapidus A."/>
            <person name="Barry K."/>
            <person name="Detter J.C."/>
            <person name="Glavina T."/>
            <person name="Hammon N."/>
            <person name="Israni S."/>
            <person name="Pitluck S."/>
            <person name="Bryant D."/>
            <person name="Schmutz J."/>
            <person name="Larimer F."/>
            <person name="Land M."/>
            <person name="Kyrpides N."/>
            <person name="Ivanova N."/>
            <person name="Richardson P."/>
        </authorList>
    </citation>
    <scope>NUCLEOTIDE SEQUENCE [LARGE SCALE GENOMIC DNA]</scope>
    <source>
        <strain>DSM 273 / BCRC 81028 / 2530</strain>
    </source>
</reference>
<accession>Q3B6B4</accession>
<name>NDK_CHLL3</name>
<sequence>MERTLTILKPDCVKKQLIGAVINQIERAGFRVVAMKKTRLTKETAGEFYAVHRERPFYGELVDFMSSGPCVPMILEKANAVADFRTLIGATDPAEAAEGTVRKLYADSKGENIVHGSDSAENAAVEAGFFFAAEEVVRSN</sequence>
<proteinExistence type="inferred from homology"/>
<protein>
    <recommendedName>
        <fullName evidence="1">Nucleoside diphosphate kinase</fullName>
        <shortName evidence="1">NDK</shortName>
        <shortName evidence="1">NDP kinase</shortName>
        <ecNumber evidence="1">2.7.4.6</ecNumber>
    </recommendedName>
    <alternativeName>
        <fullName evidence="1">Nucleoside-2-P kinase</fullName>
    </alternativeName>
</protein>
<comment type="function">
    <text evidence="1">Major role in the synthesis of nucleoside triphosphates other than ATP. The ATP gamma phosphate is transferred to the NDP beta phosphate via a ping-pong mechanism, using a phosphorylated active-site intermediate.</text>
</comment>
<comment type="catalytic activity">
    <reaction evidence="1">
        <text>a 2'-deoxyribonucleoside 5'-diphosphate + ATP = a 2'-deoxyribonucleoside 5'-triphosphate + ADP</text>
        <dbReference type="Rhea" id="RHEA:44640"/>
        <dbReference type="ChEBI" id="CHEBI:30616"/>
        <dbReference type="ChEBI" id="CHEBI:61560"/>
        <dbReference type="ChEBI" id="CHEBI:73316"/>
        <dbReference type="ChEBI" id="CHEBI:456216"/>
        <dbReference type="EC" id="2.7.4.6"/>
    </reaction>
</comment>
<comment type="catalytic activity">
    <reaction evidence="1">
        <text>a ribonucleoside 5'-diphosphate + ATP = a ribonucleoside 5'-triphosphate + ADP</text>
        <dbReference type="Rhea" id="RHEA:18113"/>
        <dbReference type="ChEBI" id="CHEBI:30616"/>
        <dbReference type="ChEBI" id="CHEBI:57930"/>
        <dbReference type="ChEBI" id="CHEBI:61557"/>
        <dbReference type="ChEBI" id="CHEBI:456216"/>
        <dbReference type="EC" id="2.7.4.6"/>
    </reaction>
</comment>
<comment type="cofactor">
    <cofactor evidence="1">
        <name>Mg(2+)</name>
        <dbReference type="ChEBI" id="CHEBI:18420"/>
    </cofactor>
</comment>
<comment type="subunit">
    <text evidence="1">Homotetramer.</text>
</comment>
<comment type="subcellular location">
    <subcellularLocation>
        <location evidence="1">Cytoplasm</location>
    </subcellularLocation>
</comment>
<comment type="similarity">
    <text evidence="1">Belongs to the NDK family.</text>
</comment>